<comment type="function">
    <text evidence="1">Participates actively in the response to hyperosmotic and heat shock by preventing the aggregation of stress-denatured proteins, in association with DnaK and GrpE. It is the nucleotide exchange factor for DnaK and may function as a thermosensor. Unfolded proteins bind initially to DnaJ; upon interaction with the DnaJ-bound protein, DnaK hydrolyzes its bound ATP, resulting in the formation of a stable complex. GrpE releases ADP from DnaK; ATP binding to DnaK triggers the release of the substrate protein, thus completing the reaction cycle. Several rounds of ATP-dependent interactions between DnaJ, DnaK and GrpE are required for fully efficient folding.</text>
</comment>
<comment type="subunit">
    <text evidence="1">Homodimer.</text>
</comment>
<comment type="subcellular location">
    <subcellularLocation>
        <location evidence="1">Cytoplasm</location>
    </subcellularLocation>
</comment>
<comment type="similarity">
    <text evidence="1">Belongs to the GrpE family.</text>
</comment>
<dbReference type="EMBL" id="CT971583">
    <property type="protein sequence ID" value="CAK22448.1"/>
    <property type="molecule type" value="Genomic_DNA"/>
</dbReference>
<dbReference type="SMR" id="A5GHN3"/>
<dbReference type="STRING" id="32051.SynWH7803_0022"/>
<dbReference type="KEGG" id="syx:SynWH7803_0022"/>
<dbReference type="eggNOG" id="COG0576">
    <property type="taxonomic scope" value="Bacteria"/>
</dbReference>
<dbReference type="HOGENOM" id="CLU_057217_5_1_3"/>
<dbReference type="Proteomes" id="UP000001566">
    <property type="component" value="Chromosome"/>
</dbReference>
<dbReference type="GO" id="GO:0005737">
    <property type="term" value="C:cytoplasm"/>
    <property type="evidence" value="ECO:0007669"/>
    <property type="project" value="UniProtKB-SubCell"/>
</dbReference>
<dbReference type="GO" id="GO:0000774">
    <property type="term" value="F:adenyl-nucleotide exchange factor activity"/>
    <property type="evidence" value="ECO:0007669"/>
    <property type="project" value="InterPro"/>
</dbReference>
<dbReference type="GO" id="GO:0042803">
    <property type="term" value="F:protein homodimerization activity"/>
    <property type="evidence" value="ECO:0007669"/>
    <property type="project" value="InterPro"/>
</dbReference>
<dbReference type="GO" id="GO:0051087">
    <property type="term" value="F:protein-folding chaperone binding"/>
    <property type="evidence" value="ECO:0007669"/>
    <property type="project" value="InterPro"/>
</dbReference>
<dbReference type="GO" id="GO:0051082">
    <property type="term" value="F:unfolded protein binding"/>
    <property type="evidence" value="ECO:0007669"/>
    <property type="project" value="TreeGrafter"/>
</dbReference>
<dbReference type="GO" id="GO:0006457">
    <property type="term" value="P:protein folding"/>
    <property type="evidence" value="ECO:0007669"/>
    <property type="project" value="InterPro"/>
</dbReference>
<dbReference type="CDD" id="cd00446">
    <property type="entry name" value="GrpE"/>
    <property type="match status" value="1"/>
</dbReference>
<dbReference type="FunFam" id="2.30.22.10:FF:000001">
    <property type="entry name" value="Protein GrpE"/>
    <property type="match status" value="1"/>
</dbReference>
<dbReference type="Gene3D" id="3.90.20.20">
    <property type="match status" value="1"/>
</dbReference>
<dbReference type="Gene3D" id="2.30.22.10">
    <property type="entry name" value="Head domain of nucleotide exchange factor GrpE"/>
    <property type="match status" value="1"/>
</dbReference>
<dbReference type="HAMAP" id="MF_01151">
    <property type="entry name" value="GrpE"/>
    <property type="match status" value="1"/>
</dbReference>
<dbReference type="InterPro" id="IPR000740">
    <property type="entry name" value="GrpE"/>
</dbReference>
<dbReference type="InterPro" id="IPR013805">
    <property type="entry name" value="GrpE_coiled_coil"/>
</dbReference>
<dbReference type="InterPro" id="IPR009012">
    <property type="entry name" value="GrpE_head"/>
</dbReference>
<dbReference type="NCBIfam" id="NF010741">
    <property type="entry name" value="PRK14143.1"/>
    <property type="match status" value="1"/>
</dbReference>
<dbReference type="PANTHER" id="PTHR21237">
    <property type="entry name" value="GRPE PROTEIN"/>
    <property type="match status" value="1"/>
</dbReference>
<dbReference type="PANTHER" id="PTHR21237:SF23">
    <property type="entry name" value="GRPE PROTEIN HOMOLOG, MITOCHONDRIAL"/>
    <property type="match status" value="1"/>
</dbReference>
<dbReference type="Pfam" id="PF01025">
    <property type="entry name" value="GrpE"/>
    <property type="match status" value="1"/>
</dbReference>
<dbReference type="PRINTS" id="PR00773">
    <property type="entry name" value="GRPEPROTEIN"/>
</dbReference>
<dbReference type="SUPFAM" id="SSF58014">
    <property type="entry name" value="Coiled-coil domain of nucleotide exchange factor GrpE"/>
    <property type="match status" value="1"/>
</dbReference>
<dbReference type="SUPFAM" id="SSF51064">
    <property type="entry name" value="Head domain of nucleotide exchange factor GrpE"/>
    <property type="match status" value="1"/>
</dbReference>
<dbReference type="PROSITE" id="PS01071">
    <property type="entry name" value="GRPE"/>
    <property type="match status" value="1"/>
</dbReference>
<organism>
    <name type="scientific">Synechococcus sp. (strain WH7803)</name>
    <dbReference type="NCBI Taxonomy" id="32051"/>
    <lineage>
        <taxon>Bacteria</taxon>
        <taxon>Bacillati</taxon>
        <taxon>Cyanobacteriota</taxon>
        <taxon>Cyanophyceae</taxon>
        <taxon>Synechococcales</taxon>
        <taxon>Synechococcaceae</taxon>
        <taxon>Synechococcus</taxon>
    </lineage>
</organism>
<proteinExistence type="inferred from homology"/>
<reference key="1">
    <citation type="submission" date="2006-05" db="EMBL/GenBank/DDBJ databases">
        <authorList>
            <consortium name="Genoscope"/>
        </authorList>
    </citation>
    <scope>NUCLEOTIDE SEQUENCE [LARGE SCALE GENOMIC DNA]</scope>
    <source>
        <strain>WH7803</strain>
    </source>
</reference>
<gene>
    <name evidence="1" type="primary">grpE</name>
    <name type="ordered locus">SynWH7803_0022</name>
</gene>
<keyword id="KW-0143">Chaperone</keyword>
<keyword id="KW-0963">Cytoplasm</keyword>
<keyword id="KW-1185">Reference proteome</keyword>
<keyword id="KW-0346">Stress response</keyword>
<accession>A5GHN3</accession>
<protein>
    <recommendedName>
        <fullName evidence="1">Protein GrpE</fullName>
    </recommendedName>
    <alternativeName>
        <fullName evidence="1">HSP-70 cofactor</fullName>
    </alternativeName>
</protein>
<feature type="chain" id="PRO_1000137635" description="Protein GrpE">
    <location>
        <begin position="1"/>
        <end position="240"/>
    </location>
</feature>
<feature type="region of interest" description="Disordered" evidence="2">
    <location>
        <begin position="1"/>
        <end position="54"/>
    </location>
</feature>
<feature type="region of interest" description="Disordered" evidence="2">
    <location>
        <begin position="206"/>
        <end position="240"/>
    </location>
</feature>
<feature type="compositionally biased region" description="Low complexity" evidence="2">
    <location>
        <begin position="215"/>
        <end position="233"/>
    </location>
</feature>
<name>GRPE_SYNPW</name>
<sequence>MSGDASTPEQDPAQVVADGQQPVETPNDPVETPSASDPGSAAEVSPQTGNNEARLEQLEREHTTLRDEHDVLRGQYMRIAADFDNFRKRQSRDQDDLKIQLTCSTLSEILPVVDNFERARQQLDPQGEEAQALHRSYQGLYKQLVDVLKQLGVAPMRVVGQEFDPTLHEAVLREPSDAHPEDVVIEELQRGYHLNGKVLRHAMVKVSMGPGPQDGASSQPAEAPAADAPAEDSGSGDGNG</sequence>
<evidence type="ECO:0000255" key="1">
    <source>
        <dbReference type="HAMAP-Rule" id="MF_01151"/>
    </source>
</evidence>
<evidence type="ECO:0000256" key="2">
    <source>
        <dbReference type="SAM" id="MobiDB-lite"/>
    </source>
</evidence>